<proteinExistence type="inferred from homology"/>
<gene>
    <name evidence="1" type="primary">hisB</name>
    <name type="ordered locus">CLD_2984</name>
</gene>
<name>HIS7_CLOBK</name>
<organism>
    <name type="scientific">Clostridium botulinum (strain Okra / Type B1)</name>
    <dbReference type="NCBI Taxonomy" id="498213"/>
    <lineage>
        <taxon>Bacteria</taxon>
        <taxon>Bacillati</taxon>
        <taxon>Bacillota</taxon>
        <taxon>Clostridia</taxon>
        <taxon>Eubacteriales</taxon>
        <taxon>Clostridiaceae</taxon>
        <taxon>Clostridium</taxon>
    </lineage>
</organism>
<comment type="catalytic activity">
    <reaction evidence="1">
        <text>D-erythro-1-(imidazol-4-yl)glycerol 3-phosphate = 3-(imidazol-4-yl)-2-oxopropyl phosphate + H2O</text>
        <dbReference type="Rhea" id="RHEA:11040"/>
        <dbReference type="ChEBI" id="CHEBI:15377"/>
        <dbReference type="ChEBI" id="CHEBI:57766"/>
        <dbReference type="ChEBI" id="CHEBI:58278"/>
        <dbReference type="EC" id="4.2.1.19"/>
    </reaction>
</comment>
<comment type="pathway">
    <text evidence="1">Amino-acid biosynthesis; L-histidine biosynthesis; L-histidine from 5-phospho-alpha-D-ribose 1-diphosphate: step 6/9.</text>
</comment>
<comment type="subcellular location">
    <subcellularLocation>
        <location evidence="1">Cytoplasm</location>
    </subcellularLocation>
</comment>
<comment type="similarity">
    <text evidence="1">Belongs to the imidazoleglycerol-phosphate dehydratase family.</text>
</comment>
<keyword id="KW-0028">Amino-acid biosynthesis</keyword>
<keyword id="KW-0963">Cytoplasm</keyword>
<keyword id="KW-0368">Histidine biosynthesis</keyword>
<keyword id="KW-0456">Lyase</keyword>
<protein>
    <recommendedName>
        <fullName evidence="1">Imidazoleglycerol-phosphate dehydratase</fullName>
        <shortName evidence="1">IGPD</shortName>
        <ecNumber evidence="1">4.2.1.19</ecNumber>
    </recommendedName>
</protein>
<reference key="1">
    <citation type="journal article" date="2007" name="PLoS ONE">
        <title>Analysis of the neurotoxin complex genes in Clostridium botulinum A1-A4 and B1 strains: BoNT/A3, /Ba4 and /B1 clusters are located within plasmids.</title>
        <authorList>
            <person name="Smith T.J."/>
            <person name="Hill K.K."/>
            <person name="Foley B.T."/>
            <person name="Detter J.C."/>
            <person name="Munk A.C."/>
            <person name="Bruce D.C."/>
            <person name="Doggett N.A."/>
            <person name="Smith L.A."/>
            <person name="Marks J.D."/>
            <person name="Xie G."/>
            <person name="Brettin T.S."/>
        </authorList>
    </citation>
    <scope>NUCLEOTIDE SEQUENCE [LARGE SCALE GENOMIC DNA]</scope>
    <source>
        <strain>Okra / Type B1</strain>
    </source>
</reference>
<dbReference type="EC" id="4.2.1.19" evidence="1"/>
<dbReference type="EMBL" id="CP000939">
    <property type="protein sequence ID" value="ACA45655.1"/>
    <property type="molecule type" value="Genomic_DNA"/>
</dbReference>
<dbReference type="RefSeq" id="WP_004451721.1">
    <property type="nucleotide sequence ID" value="NC_010516.1"/>
</dbReference>
<dbReference type="SMR" id="B1ILA6"/>
<dbReference type="KEGG" id="cbb:CLD_2984"/>
<dbReference type="HOGENOM" id="CLU_044308_2_0_9"/>
<dbReference type="UniPathway" id="UPA00031">
    <property type="reaction ID" value="UER00011"/>
</dbReference>
<dbReference type="Proteomes" id="UP000008541">
    <property type="component" value="Chromosome"/>
</dbReference>
<dbReference type="GO" id="GO:0005737">
    <property type="term" value="C:cytoplasm"/>
    <property type="evidence" value="ECO:0007669"/>
    <property type="project" value="UniProtKB-SubCell"/>
</dbReference>
<dbReference type="GO" id="GO:0004424">
    <property type="term" value="F:imidazoleglycerol-phosphate dehydratase activity"/>
    <property type="evidence" value="ECO:0007669"/>
    <property type="project" value="UniProtKB-UniRule"/>
</dbReference>
<dbReference type="GO" id="GO:0000105">
    <property type="term" value="P:L-histidine biosynthetic process"/>
    <property type="evidence" value="ECO:0007669"/>
    <property type="project" value="UniProtKB-UniRule"/>
</dbReference>
<dbReference type="CDD" id="cd07914">
    <property type="entry name" value="IGPD"/>
    <property type="match status" value="1"/>
</dbReference>
<dbReference type="FunFam" id="3.30.230.40:FF:000001">
    <property type="entry name" value="Imidazoleglycerol-phosphate dehydratase HisB"/>
    <property type="match status" value="1"/>
</dbReference>
<dbReference type="FunFam" id="3.30.230.40:FF:000003">
    <property type="entry name" value="Imidazoleglycerol-phosphate dehydratase HisB"/>
    <property type="match status" value="1"/>
</dbReference>
<dbReference type="Gene3D" id="3.30.230.40">
    <property type="entry name" value="Imidazole glycerol phosphate dehydratase, domain 1"/>
    <property type="match status" value="2"/>
</dbReference>
<dbReference type="HAMAP" id="MF_00076">
    <property type="entry name" value="HisB"/>
    <property type="match status" value="1"/>
</dbReference>
<dbReference type="InterPro" id="IPR038494">
    <property type="entry name" value="IGPD_sf"/>
</dbReference>
<dbReference type="InterPro" id="IPR000807">
    <property type="entry name" value="ImidazoleglycerolP_deHydtase"/>
</dbReference>
<dbReference type="InterPro" id="IPR020565">
    <property type="entry name" value="ImidazoleglycerP_deHydtase_CS"/>
</dbReference>
<dbReference type="InterPro" id="IPR020568">
    <property type="entry name" value="Ribosomal_Su5_D2-typ_SF"/>
</dbReference>
<dbReference type="NCBIfam" id="NF002107">
    <property type="entry name" value="PRK00951.1-2"/>
    <property type="match status" value="1"/>
</dbReference>
<dbReference type="NCBIfam" id="NF002109">
    <property type="entry name" value="PRK00951.1-5"/>
    <property type="match status" value="1"/>
</dbReference>
<dbReference type="NCBIfam" id="NF002111">
    <property type="entry name" value="PRK00951.2-1"/>
    <property type="match status" value="1"/>
</dbReference>
<dbReference type="NCBIfam" id="NF002112">
    <property type="entry name" value="PRK00951.2-2"/>
    <property type="match status" value="1"/>
</dbReference>
<dbReference type="NCBIfam" id="NF002114">
    <property type="entry name" value="PRK00951.2-4"/>
    <property type="match status" value="1"/>
</dbReference>
<dbReference type="PANTHER" id="PTHR23133:SF2">
    <property type="entry name" value="IMIDAZOLEGLYCEROL-PHOSPHATE DEHYDRATASE"/>
    <property type="match status" value="1"/>
</dbReference>
<dbReference type="PANTHER" id="PTHR23133">
    <property type="entry name" value="IMIDAZOLEGLYCEROL-PHOSPHATE DEHYDRATASE HIS7"/>
    <property type="match status" value="1"/>
</dbReference>
<dbReference type="Pfam" id="PF00475">
    <property type="entry name" value="IGPD"/>
    <property type="match status" value="1"/>
</dbReference>
<dbReference type="SUPFAM" id="SSF54211">
    <property type="entry name" value="Ribosomal protein S5 domain 2-like"/>
    <property type="match status" value="2"/>
</dbReference>
<dbReference type="PROSITE" id="PS00954">
    <property type="entry name" value="IGP_DEHYDRATASE_1"/>
    <property type="match status" value="1"/>
</dbReference>
<dbReference type="PROSITE" id="PS00955">
    <property type="entry name" value="IGP_DEHYDRATASE_2"/>
    <property type="match status" value="1"/>
</dbReference>
<evidence type="ECO:0000255" key="1">
    <source>
        <dbReference type="HAMAP-Rule" id="MF_00076"/>
    </source>
</evidence>
<feature type="chain" id="PRO_1000092685" description="Imidazoleglycerol-phosphate dehydratase">
    <location>
        <begin position="1"/>
        <end position="196"/>
    </location>
</feature>
<sequence>MKESIAKVYRKTGETEIKSEINLYGEGKYDIKTGIGFFDHMLNLMARHGLIDVKLEAKGDLQVDSHHTVEDVGIVLGESFKKALGDKKGIKRYGTSFVPMDEALASLSIDISGRPYIVCDFNFTVDKLGEMDTELVEEFLRALAFNAGITIHARVLYGKNNHHMIEAVFKALGRALREAVDRDERINGVMSTKGTL</sequence>
<accession>B1ILA6</accession>